<reference key="1">
    <citation type="journal article" date="2009" name="PLoS Genet.">
        <title>Organised genome dynamics in the Escherichia coli species results in highly diverse adaptive paths.</title>
        <authorList>
            <person name="Touchon M."/>
            <person name="Hoede C."/>
            <person name="Tenaillon O."/>
            <person name="Barbe V."/>
            <person name="Baeriswyl S."/>
            <person name="Bidet P."/>
            <person name="Bingen E."/>
            <person name="Bonacorsi S."/>
            <person name="Bouchier C."/>
            <person name="Bouvet O."/>
            <person name="Calteau A."/>
            <person name="Chiapello H."/>
            <person name="Clermont O."/>
            <person name="Cruveiller S."/>
            <person name="Danchin A."/>
            <person name="Diard M."/>
            <person name="Dossat C."/>
            <person name="Karoui M.E."/>
            <person name="Frapy E."/>
            <person name="Garry L."/>
            <person name="Ghigo J.M."/>
            <person name="Gilles A.M."/>
            <person name="Johnson J."/>
            <person name="Le Bouguenec C."/>
            <person name="Lescat M."/>
            <person name="Mangenot S."/>
            <person name="Martinez-Jehanne V."/>
            <person name="Matic I."/>
            <person name="Nassif X."/>
            <person name="Oztas S."/>
            <person name="Petit M.A."/>
            <person name="Pichon C."/>
            <person name="Rouy Z."/>
            <person name="Ruf C.S."/>
            <person name="Schneider D."/>
            <person name="Tourret J."/>
            <person name="Vacherie B."/>
            <person name="Vallenet D."/>
            <person name="Medigue C."/>
            <person name="Rocha E.P.C."/>
            <person name="Denamur E."/>
        </authorList>
    </citation>
    <scope>NUCLEOTIDE SEQUENCE [LARGE SCALE GENOMIC DNA]</scope>
    <source>
        <strain>IAI1</strain>
    </source>
</reference>
<sequence length="473" mass="50349">MKTDTPSLETPQAARLRRRQLIRQLLERDKTPLAILFMAAVVGTLVGLAAVAFDKGVAWLQNQRMGALVHTADNYPLLLTVAFLCSAVLAMFGYFLVRKYAPEAGGSGIPEIEGALEDQRPVRWWRVLPVKFFGGLGTLGGGMVLGREGPTVQIGGNIGRMVLDIFRLKGDEARHTLLATGAAAGLAAAFNAPLAGILFIIEEMRPQFRYTLISIKAVFIGVIMSTIMYRIFNHEVALIDVGKLSDAPLNTLWLYLILGIIFGIFGPIFNKWVLGMQDLLHRVHGGNITKWVLMGGAIGGLCGLLGFVAPATSGGGFNLIPIATAGNFSMGMLVFIFVARVITTLLCFSSGAPGGIFAPMLALGTVLGTAFGMVAVELFPQYHLEAGTFAIAGMGALLAASIRAPLTGIILVLEMTDNYQLILPMIITGLGATLLAQFTGGKPLYSAILARTLAKQEAEQLARSKAASASENT</sequence>
<feature type="chain" id="PRO_1000137296" description="H(+)/Cl(-) exchange transporter ClcA">
    <location>
        <begin position="1"/>
        <end position="473"/>
    </location>
</feature>
<feature type="topological domain" description="Cytoplasmic" evidence="1">
    <location>
        <begin position="1"/>
        <end position="32"/>
    </location>
</feature>
<feature type="transmembrane region" description="Helical" evidence="1">
    <location>
        <begin position="33"/>
        <end position="69"/>
    </location>
</feature>
<feature type="topological domain" description="Periplasmic" evidence="1">
    <location>
        <begin position="70"/>
        <end position="76"/>
    </location>
</feature>
<feature type="transmembrane region" description="Helical" evidence="1">
    <location>
        <begin position="77"/>
        <end position="100"/>
    </location>
</feature>
<feature type="intramembrane region" description="Helical" evidence="1">
    <location>
        <begin position="109"/>
        <end position="116"/>
    </location>
</feature>
<feature type="topological domain" description="Cytoplasmic" evidence="1">
    <location>
        <begin position="117"/>
        <end position="123"/>
    </location>
</feature>
<feature type="transmembrane region" description="Helical" evidence="1">
    <location>
        <begin position="124"/>
        <end position="141"/>
    </location>
</feature>
<feature type="transmembrane region" description="Helical" evidence="1">
    <location>
        <begin position="148"/>
        <end position="166"/>
    </location>
</feature>
<feature type="topological domain" description="Cytoplasmic" evidence="1">
    <location>
        <begin position="167"/>
        <end position="176"/>
    </location>
</feature>
<feature type="intramembrane region" description="Helical" evidence="1">
    <location>
        <begin position="177"/>
        <end position="189"/>
    </location>
</feature>
<feature type="intramembrane region" description="Helical" evidence="1">
    <location>
        <begin position="193"/>
        <end position="201"/>
    </location>
</feature>
<feature type="topological domain" description="Cytoplasmic" evidence="1">
    <location>
        <begin position="202"/>
        <end position="214"/>
    </location>
</feature>
<feature type="transmembrane region" description="Helical" evidence="1">
    <location>
        <begin position="215"/>
        <end position="232"/>
    </location>
</feature>
<feature type="topological domain" description="Periplasmic" evidence="1">
    <location>
        <begin position="233"/>
        <end position="252"/>
    </location>
</feature>
<feature type="transmembrane region" description="Helical" evidence="1">
    <location>
        <begin position="253"/>
        <end position="281"/>
    </location>
</feature>
<feature type="topological domain" description="Cytoplasmic" evidence="1">
    <location>
        <begin position="282"/>
        <end position="287"/>
    </location>
</feature>
<feature type="transmembrane region" description="Helical" evidence="1">
    <location>
        <begin position="288"/>
        <end position="309"/>
    </location>
</feature>
<feature type="topological domain" description="Periplasmic" evidence="1">
    <location>
        <begin position="310"/>
        <end position="329"/>
    </location>
</feature>
<feature type="transmembrane region" description="Helical" evidence="1">
    <location>
        <begin position="330"/>
        <end position="349"/>
    </location>
</feature>
<feature type="transmembrane region" description="Helical" evidence="1">
    <location>
        <begin position="355"/>
        <end position="376"/>
    </location>
</feature>
<feature type="topological domain" description="Periplasmic" evidence="1">
    <location>
        <begin position="377"/>
        <end position="386"/>
    </location>
</feature>
<feature type="intramembrane region" description="Helical" evidence="1">
    <location>
        <begin position="387"/>
        <end position="401"/>
    </location>
</feature>
<feature type="intramembrane region" description="Note=Loop between two helices" evidence="1">
    <location>
        <begin position="402"/>
        <end position="404"/>
    </location>
</feature>
<feature type="intramembrane region" description="Helical" evidence="1">
    <location>
        <begin position="405"/>
        <end position="416"/>
    </location>
</feature>
<feature type="intramembrane region" description="Note=Loop between two helices" evidence="1">
    <location>
        <begin position="417"/>
        <end position="421"/>
    </location>
</feature>
<feature type="transmembrane region" description="Helical" evidence="1">
    <location>
        <begin position="422"/>
        <end position="438"/>
    </location>
</feature>
<feature type="topological domain" description="Cytoplasmic" evidence="1">
    <location>
        <begin position="439"/>
        <end position="473"/>
    </location>
</feature>
<feature type="short sequence motif" description="Selectivity filter part_1" evidence="1">
    <location>
        <begin position="106"/>
        <end position="110"/>
    </location>
</feature>
<feature type="short sequence motif" description="Selectivity filter part_2" evidence="1">
    <location>
        <begin position="146"/>
        <end position="150"/>
    </location>
</feature>
<feature type="short sequence motif" description="Selectivity filter part_3" evidence="1">
    <location>
        <begin position="355"/>
        <end position="359"/>
    </location>
</feature>
<feature type="binding site" evidence="1">
    <location>
        <position position="107"/>
    </location>
    <ligand>
        <name>chloride</name>
        <dbReference type="ChEBI" id="CHEBI:17996"/>
    </ligand>
</feature>
<feature type="binding site" evidence="1">
    <location>
        <position position="356"/>
    </location>
    <ligand>
        <name>chloride</name>
        <dbReference type="ChEBI" id="CHEBI:17996"/>
    </ligand>
</feature>
<feature type="binding site" evidence="1">
    <location>
        <position position="357"/>
    </location>
    <ligand>
        <name>chloride</name>
        <dbReference type="ChEBI" id="CHEBI:17996"/>
    </ligand>
</feature>
<feature type="binding site" evidence="1">
    <location>
        <position position="445"/>
    </location>
    <ligand>
        <name>chloride</name>
        <dbReference type="ChEBI" id="CHEBI:17996"/>
    </ligand>
</feature>
<feature type="site" description="Mediates proton transfer from the outer aqueous phase to the interior of the protein; involved in linking H(+) and Cl(-) transport" evidence="1">
    <location>
        <position position="148"/>
    </location>
</feature>
<feature type="site" description="Mediates proton transfer from the protein to the inner aqueous phase" evidence="1">
    <location>
        <position position="203"/>
    </location>
</feature>
<proteinExistence type="inferred from homology"/>
<gene>
    <name evidence="1" type="primary">clcA</name>
    <name evidence="1" type="synonym">eriC</name>
    <name type="ordered locus">ECIAI1_0153</name>
</gene>
<accession>B7M196</accession>
<dbReference type="EMBL" id="CU928160">
    <property type="protein sequence ID" value="CAQ97042.1"/>
    <property type="molecule type" value="Genomic_DNA"/>
</dbReference>
<dbReference type="RefSeq" id="WP_000845394.1">
    <property type="nucleotide sequence ID" value="NC_011741.1"/>
</dbReference>
<dbReference type="SMR" id="B7M196"/>
<dbReference type="GeneID" id="93777272"/>
<dbReference type="KEGG" id="ecr:ECIAI1_0153"/>
<dbReference type="HOGENOM" id="CLU_015263_7_0_6"/>
<dbReference type="GO" id="GO:0005886">
    <property type="term" value="C:plasma membrane"/>
    <property type="evidence" value="ECO:0007669"/>
    <property type="project" value="UniProtKB-SubCell"/>
</dbReference>
<dbReference type="GO" id="GO:0015297">
    <property type="term" value="F:antiporter activity"/>
    <property type="evidence" value="ECO:0007669"/>
    <property type="project" value="UniProtKB-UniRule"/>
</dbReference>
<dbReference type="GO" id="GO:0005247">
    <property type="term" value="F:voltage-gated chloride channel activity"/>
    <property type="evidence" value="ECO:0007669"/>
    <property type="project" value="TreeGrafter"/>
</dbReference>
<dbReference type="CDD" id="cd01031">
    <property type="entry name" value="EriC"/>
    <property type="match status" value="1"/>
</dbReference>
<dbReference type="FunFam" id="1.10.3080.10:FF:000005">
    <property type="entry name" value="H(+)/Cl(-) exchange transporter ClcA"/>
    <property type="match status" value="1"/>
</dbReference>
<dbReference type="Gene3D" id="1.10.3080.10">
    <property type="entry name" value="Clc chloride channel"/>
    <property type="match status" value="1"/>
</dbReference>
<dbReference type="HAMAP" id="MF_01128">
    <property type="entry name" value="CLC_ClcA"/>
    <property type="match status" value="1"/>
</dbReference>
<dbReference type="InterPro" id="IPR023861">
    <property type="entry name" value="Cl-channel_ClcA"/>
</dbReference>
<dbReference type="InterPro" id="IPR014743">
    <property type="entry name" value="Cl-channel_core"/>
</dbReference>
<dbReference type="InterPro" id="IPR001807">
    <property type="entry name" value="ClC"/>
</dbReference>
<dbReference type="NCBIfam" id="NF003640">
    <property type="entry name" value="PRK05277.1"/>
    <property type="match status" value="1"/>
</dbReference>
<dbReference type="PANTHER" id="PTHR45711">
    <property type="entry name" value="CHLORIDE CHANNEL PROTEIN"/>
    <property type="match status" value="1"/>
</dbReference>
<dbReference type="PANTHER" id="PTHR45711:SF6">
    <property type="entry name" value="CHLORIDE CHANNEL PROTEIN"/>
    <property type="match status" value="1"/>
</dbReference>
<dbReference type="Pfam" id="PF00654">
    <property type="entry name" value="Voltage_CLC"/>
    <property type="match status" value="1"/>
</dbReference>
<dbReference type="PRINTS" id="PR00762">
    <property type="entry name" value="CLCHANNEL"/>
</dbReference>
<dbReference type="SUPFAM" id="SSF81340">
    <property type="entry name" value="Clc chloride channel"/>
    <property type="match status" value="1"/>
</dbReference>
<name>CLCA_ECO8A</name>
<protein>
    <recommendedName>
        <fullName evidence="1">H(+)/Cl(-) exchange transporter ClcA</fullName>
    </recommendedName>
</protein>
<comment type="function">
    <text evidence="1">Proton-coupled chloride transporter. Functions as antiport system and exchanges two chloride ions for 1 proton. Probably acts as an electrical shunt for an outwardly-directed proton pump that is linked to amino acid decarboxylation, as part of the extreme acid resistance (XAR) response.</text>
</comment>
<comment type="catalytic activity">
    <reaction evidence="1">
        <text>2 chloride(in) + H(+)(out) = 2 chloride(out) + H(+)(in)</text>
        <dbReference type="Rhea" id="RHEA:29567"/>
        <dbReference type="ChEBI" id="CHEBI:15378"/>
        <dbReference type="ChEBI" id="CHEBI:17996"/>
    </reaction>
</comment>
<comment type="subunit">
    <text evidence="1">Homodimer.</text>
</comment>
<comment type="subcellular location">
    <subcellularLocation>
        <location evidence="1">Cell inner membrane</location>
        <topology evidence="1">Multi-pass membrane protein</topology>
    </subcellularLocation>
</comment>
<comment type="similarity">
    <text evidence="1">Belongs to the chloride channel (TC 2.A.49) family. ClcA subfamily.</text>
</comment>
<evidence type="ECO:0000255" key="1">
    <source>
        <dbReference type="HAMAP-Rule" id="MF_01128"/>
    </source>
</evidence>
<keyword id="KW-0050">Antiport</keyword>
<keyword id="KW-0997">Cell inner membrane</keyword>
<keyword id="KW-1003">Cell membrane</keyword>
<keyword id="KW-0868">Chloride</keyword>
<keyword id="KW-0406">Ion transport</keyword>
<keyword id="KW-0472">Membrane</keyword>
<keyword id="KW-0812">Transmembrane</keyword>
<keyword id="KW-1133">Transmembrane helix</keyword>
<keyword id="KW-0813">Transport</keyword>
<organism>
    <name type="scientific">Escherichia coli O8 (strain IAI1)</name>
    <dbReference type="NCBI Taxonomy" id="585034"/>
    <lineage>
        <taxon>Bacteria</taxon>
        <taxon>Pseudomonadati</taxon>
        <taxon>Pseudomonadota</taxon>
        <taxon>Gammaproteobacteria</taxon>
        <taxon>Enterobacterales</taxon>
        <taxon>Enterobacteriaceae</taxon>
        <taxon>Escherichia</taxon>
    </lineage>
</organism>